<protein>
    <recommendedName>
        <fullName evidence="1">Cysteine--tRNA ligase</fullName>
        <ecNumber evidence="1">6.1.1.16</ecNumber>
    </recommendedName>
    <alternativeName>
        <fullName evidence="1">Cysteinyl-tRNA synthetase</fullName>
        <shortName evidence="1">CysRS</shortName>
    </alternativeName>
</protein>
<comment type="catalytic activity">
    <reaction evidence="1">
        <text>tRNA(Cys) + L-cysteine + ATP = L-cysteinyl-tRNA(Cys) + AMP + diphosphate</text>
        <dbReference type="Rhea" id="RHEA:17773"/>
        <dbReference type="Rhea" id="RHEA-COMP:9661"/>
        <dbReference type="Rhea" id="RHEA-COMP:9679"/>
        <dbReference type="ChEBI" id="CHEBI:30616"/>
        <dbReference type="ChEBI" id="CHEBI:33019"/>
        <dbReference type="ChEBI" id="CHEBI:35235"/>
        <dbReference type="ChEBI" id="CHEBI:78442"/>
        <dbReference type="ChEBI" id="CHEBI:78517"/>
        <dbReference type="ChEBI" id="CHEBI:456215"/>
        <dbReference type="EC" id="6.1.1.16"/>
    </reaction>
</comment>
<comment type="cofactor">
    <cofactor evidence="1">
        <name>Zn(2+)</name>
        <dbReference type="ChEBI" id="CHEBI:29105"/>
    </cofactor>
    <text evidence="1">Binds 1 zinc ion per subunit.</text>
</comment>
<comment type="subunit">
    <text evidence="1">Monomer.</text>
</comment>
<comment type="subcellular location">
    <subcellularLocation>
        <location evidence="1">Cytoplasm</location>
    </subcellularLocation>
</comment>
<comment type="similarity">
    <text evidence="1">Belongs to the class-I aminoacyl-tRNA synthetase family.</text>
</comment>
<gene>
    <name evidence="1" type="primary">cysS</name>
    <name type="ordered locus">Lxx18240</name>
</gene>
<name>SYC_LEIXX</name>
<dbReference type="EC" id="6.1.1.16" evidence="1"/>
<dbReference type="EMBL" id="AE016822">
    <property type="protein sequence ID" value="AAT89565.1"/>
    <property type="molecule type" value="Genomic_DNA"/>
</dbReference>
<dbReference type="RefSeq" id="WP_011186553.1">
    <property type="nucleotide sequence ID" value="NC_006087.1"/>
</dbReference>
<dbReference type="SMR" id="Q6ADI1"/>
<dbReference type="STRING" id="281090.Lxx18240"/>
<dbReference type="KEGG" id="lxx:Lxx18240"/>
<dbReference type="eggNOG" id="COG0215">
    <property type="taxonomic scope" value="Bacteria"/>
</dbReference>
<dbReference type="HOGENOM" id="CLU_013528_0_1_11"/>
<dbReference type="Proteomes" id="UP000001306">
    <property type="component" value="Chromosome"/>
</dbReference>
<dbReference type="GO" id="GO:0005829">
    <property type="term" value="C:cytosol"/>
    <property type="evidence" value="ECO:0007669"/>
    <property type="project" value="TreeGrafter"/>
</dbReference>
<dbReference type="GO" id="GO:0005524">
    <property type="term" value="F:ATP binding"/>
    <property type="evidence" value="ECO:0007669"/>
    <property type="project" value="UniProtKB-UniRule"/>
</dbReference>
<dbReference type="GO" id="GO:0004817">
    <property type="term" value="F:cysteine-tRNA ligase activity"/>
    <property type="evidence" value="ECO:0007669"/>
    <property type="project" value="UniProtKB-UniRule"/>
</dbReference>
<dbReference type="GO" id="GO:0008270">
    <property type="term" value="F:zinc ion binding"/>
    <property type="evidence" value="ECO:0007669"/>
    <property type="project" value="UniProtKB-UniRule"/>
</dbReference>
<dbReference type="GO" id="GO:0006423">
    <property type="term" value="P:cysteinyl-tRNA aminoacylation"/>
    <property type="evidence" value="ECO:0007669"/>
    <property type="project" value="UniProtKB-UniRule"/>
</dbReference>
<dbReference type="CDD" id="cd00672">
    <property type="entry name" value="CysRS_core"/>
    <property type="match status" value="1"/>
</dbReference>
<dbReference type="FunFam" id="3.40.50.620:FF:000068">
    <property type="entry name" value="Cysteine--tRNA ligase"/>
    <property type="match status" value="1"/>
</dbReference>
<dbReference type="Gene3D" id="1.20.120.1910">
    <property type="entry name" value="Cysteine-tRNA ligase, C-terminal anti-codon recognition domain"/>
    <property type="match status" value="1"/>
</dbReference>
<dbReference type="Gene3D" id="3.40.50.620">
    <property type="entry name" value="HUPs"/>
    <property type="match status" value="1"/>
</dbReference>
<dbReference type="HAMAP" id="MF_00041">
    <property type="entry name" value="Cys_tRNA_synth"/>
    <property type="match status" value="1"/>
</dbReference>
<dbReference type="InterPro" id="IPR015803">
    <property type="entry name" value="Cys-tRNA-ligase"/>
</dbReference>
<dbReference type="InterPro" id="IPR015273">
    <property type="entry name" value="Cys-tRNA-synt_Ia_DALR"/>
</dbReference>
<dbReference type="InterPro" id="IPR024909">
    <property type="entry name" value="Cys-tRNA/MSH_ligase"/>
</dbReference>
<dbReference type="InterPro" id="IPR056411">
    <property type="entry name" value="CysS_C"/>
</dbReference>
<dbReference type="InterPro" id="IPR014729">
    <property type="entry name" value="Rossmann-like_a/b/a_fold"/>
</dbReference>
<dbReference type="InterPro" id="IPR032678">
    <property type="entry name" value="tRNA-synt_1_cat_dom"/>
</dbReference>
<dbReference type="InterPro" id="IPR009080">
    <property type="entry name" value="tRNAsynth_Ia_anticodon-bd"/>
</dbReference>
<dbReference type="NCBIfam" id="TIGR00435">
    <property type="entry name" value="cysS"/>
    <property type="match status" value="1"/>
</dbReference>
<dbReference type="PANTHER" id="PTHR10890:SF30">
    <property type="entry name" value="CYSTEINE--TRNA LIGASE"/>
    <property type="match status" value="1"/>
</dbReference>
<dbReference type="PANTHER" id="PTHR10890">
    <property type="entry name" value="CYSTEINYL-TRNA SYNTHETASE"/>
    <property type="match status" value="1"/>
</dbReference>
<dbReference type="Pfam" id="PF23493">
    <property type="entry name" value="CysS_C"/>
    <property type="match status" value="1"/>
</dbReference>
<dbReference type="Pfam" id="PF09190">
    <property type="entry name" value="DALR_2"/>
    <property type="match status" value="1"/>
</dbReference>
<dbReference type="Pfam" id="PF01406">
    <property type="entry name" value="tRNA-synt_1e"/>
    <property type="match status" value="1"/>
</dbReference>
<dbReference type="PRINTS" id="PR00983">
    <property type="entry name" value="TRNASYNTHCYS"/>
</dbReference>
<dbReference type="SMART" id="SM00840">
    <property type="entry name" value="DALR_2"/>
    <property type="match status" value="1"/>
</dbReference>
<dbReference type="SUPFAM" id="SSF47323">
    <property type="entry name" value="Anticodon-binding domain of a subclass of class I aminoacyl-tRNA synthetases"/>
    <property type="match status" value="1"/>
</dbReference>
<dbReference type="SUPFAM" id="SSF52374">
    <property type="entry name" value="Nucleotidylyl transferase"/>
    <property type="match status" value="1"/>
</dbReference>
<evidence type="ECO:0000255" key="1">
    <source>
        <dbReference type="HAMAP-Rule" id="MF_00041"/>
    </source>
</evidence>
<keyword id="KW-0030">Aminoacyl-tRNA synthetase</keyword>
<keyword id="KW-0067">ATP-binding</keyword>
<keyword id="KW-0963">Cytoplasm</keyword>
<keyword id="KW-0436">Ligase</keyword>
<keyword id="KW-0479">Metal-binding</keyword>
<keyword id="KW-0547">Nucleotide-binding</keyword>
<keyword id="KW-0648">Protein biosynthesis</keyword>
<keyword id="KW-1185">Reference proteome</keyword>
<keyword id="KW-0862">Zinc</keyword>
<accession>Q6ADI1</accession>
<reference key="1">
    <citation type="journal article" date="2004" name="Mol. Plant Microbe Interact.">
        <title>The genome sequence of the Gram-positive sugarcane pathogen Leifsonia xyli subsp. xyli.</title>
        <authorList>
            <person name="Monteiro-Vitorello C.B."/>
            <person name="Camargo L.E.A."/>
            <person name="Van Sluys M.A."/>
            <person name="Kitajima J.P."/>
            <person name="Truffi D."/>
            <person name="do Amaral A.M."/>
            <person name="Harakava R."/>
            <person name="de Oliveira J.C.F."/>
            <person name="Wood D."/>
            <person name="de Oliveira M.C."/>
            <person name="Miyaki C.Y."/>
            <person name="Takita M.A."/>
            <person name="da Silva A.C.R."/>
            <person name="Furlan L.R."/>
            <person name="Carraro D.M."/>
            <person name="Camarotte G."/>
            <person name="Almeida N.F. Jr."/>
            <person name="Carrer H."/>
            <person name="Coutinho L.L."/>
            <person name="El-Dorry H.A."/>
            <person name="Ferro M.I.T."/>
            <person name="Gagliardi P.R."/>
            <person name="Giglioti E."/>
            <person name="Goldman M.H.S."/>
            <person name="Goldman G.H."/>
            <person name="Kimura E.T."/>
            <person name="Ferro E.S."/>
            <person name="Kuramae E.E."/>
            <person name="Lemos E.G.M."/>
            <person name="Lemos M.V.F."/>
            <person name="Mauro S.M.Z."/>
            <person name="Machado M.A."/>
            <person name="Marino C.L."/>
            <person name="Menck C.F."/>
            <person name="Nunes L.R."/>
            <person name="Oliveira R.C."/>
            <person name="Pereira G.G."/>
            <person name="Siqueira W."/>
            <person name="de Souza A.A."/>
            <person name="Tsai S.M."/>
            <person name="Zanca A.S."/>
            <person name="Simpson A.J.G."/>
            <person name="Brumbley S.M."/>
            <person name="Setubal J.C."/>
        </authorList>
    </citation>
    <scope>NUCLEOTIDE SEQUENCE [LARGE SCALE GENOMIC DNA]</scope>
    <source>
        <strain>CTCB07</strain>
    </source>
</reference>
<organism>
    <name type="scientific">Leifsonia xyli subsp. xyli (strain CTCB07)</name>
    <dbReference type="NCBI Taxonomy" id="281090"/>
    <lineage>
        <taxon>Bacteria</taxon>
        <taxon>Bacillati</taxon>
        <taxon>Actinomycetota</taxon>
        <taxon>Actinomycetes</taxon>
        <taxon>Micrococcales</taxon>
        <taxon>Microbacteriaceae</taxon>
        <taxon>Leifsonia</taxon>
    </lineage>
</organism>
<proteinExistence type="inferred from homology"/>
<feature type="chain" id="PRO_0000159418" description="Cysteine--tRNA ligase">
    <location>
        <begin position="1"/>
        <end position="477"/>
    </location>
</feature>
<feature type="short sequence motif" description="'HIGH' region">
    <location>
        <begin position="31"/>
        <end position="41"/>
    </location>
</feature>
<feature type="short sequence motif" description="'KMSKS' region">
    <location>
        <begin position="275"/>
        <end position="279"/>
    </location>
</feature>
<feature type="binding site" evidence="1">
    <location>
        <position position="29"/>
    </location>
    <ligand>
        <name>Zn(2+)</name>
        <dbReference type="ChEBI" id="CHEBI:29105"/>
    </ligand>
</feature>
<feature type="binding site" evidence="1">
    <location>
        <position position="219"/>
    </location>
    <ligand>
        <name>Zn(2+)</name>
        <dbReference type="ChEBI" id="CHEBI:29105"/>
    </ligand>
</feature>
<feature type="binding site" evidence="1">
    <location>
        <position position="244"/>
    </location>
    <ligand>
        <name>Zn(2+)</name>
        <dbReference type="ChEBI" id="CHEBI:29105"/>
    </ligand>
</feature>
<feature type="binding site" evidence="1">
    <location>
        <position position="248"/>
    </location>
    <ligand>
        <name>Zn(2+)</name>
        <dbReference type="ChEBI" id="CHEBI:29105"/>
    </ligand>
</feature>
<feature type="binding site" evidence="1">
    <location>
        <position position="278"/>
    </location>
    <ligand>
        <name>ATP</name>
        <dbReference type="ChEBI" id="CHEBI:30616"/>
    </ligand>
</feature>
<sequence>MTLRLFDTKAGALRDFVPLRSGEVGMYVCGPTVQASPHIGHLRSALVYDQLRRWLTYRGLAVTLVRNVTDIDDKVLANAAAAQAEGGSEQWWALAYRFEREFTAASVALGVQAPTYEPRATASIPQMQEIIQRLIERGHAYAAGDGSGDVYFDVRSWPAYGELTRQSADSMEAAADADPRAKRDGRDFALWKGRKADEPDSAAFPSPWGEGRPGWHIECSAMSRRYLGPRFDIHGGGLDLRFPHHENELAQSAAAGDSFANYWVHNGLVNVNGQKMSKSLGNSVSAAELLGAARPLAVRYSLGSAHYRSTIDYHDGSLSEAEAALERIAGFFERVDRRLAGTRFTGSGSEVVPIAFAEAMDDDLAVPQALAVLHETVRSGNAALDAEDLEAAAAARGQVFAMTEVLGINPLSPQWRQTGSSAAEQALGTLVERLLHNRQEARQVRDFVAADRIREELTGAGITIEDTPTGCHWSIEA</sequence>